<keyword id="KW-0489">Methyltransferase</keyword>
<keyword id="KW-0949">S-adenosyl-L-methionine</keyword>
<keyword id="KW-0808">Transferase</keyword>
<keyword id="KW-0831">Ubiquinone biosynthesis</keyword>
<reference key="1">
    <citation type="submission" date="2006-03" db="EMBL/GenBank/DDBJ databases">
        <title>Complete sequence of chromosome of Psychrobacter cryohalolentis K5.</title>
        <authorList>
            <consortium name="US DOE Joint Genome Institute"/>
            <person name="Copeland A."/>
            <person name="Lucas S."/>
            <person name="Lapidus A."/>
            <person name="Barry K."/>
            <person name="Detter J.C."/>
            <person name="Glavina T."/>
            <person name="Hammon N."/>
            <person name="Israni S."/>
            <person name="Dalin E."/>
            <person name="Tice H."/>
            <person name="Pitluck S."/>
            <person name="Brettin T."/>
            <person name="Bruce D."/>
            <person name="Han C."/>
            <person name="Tapia R."/>
            <person name="Sims D.R."/>
            <person name="Gilna P."/>
            <person name="Schmutz J."/>
            <person name="Larimer F."/>
            <person name="Land M."/>
            <person name="Hauser L."/>
            <person name="Kyrpides N."/>
            <person name="Kim E."/>
            <person name="Richardson P."/>
        </authorList>
    </citation>
    <scope>NUCLEOTIDE SEQUENCE [LARGE SCALE GENOMIC DNA]</scope>
    <source>
        <strain>ATCC BAA-1226 / DSM 17306 / VKM B-2378 / K5</strain>
    </source>
</reference>
<organism>
    <name type="scientific">Psychrobacter cryohalolentis (strain ATCC BAA-1226 / DSM 17306 / VKM B-2378 / K5)</name>
    <dbReference type="NCBI Taxonomy" id="335284"/>
    <lineage>
        <taxon>Bacteria</taxon>
        <taxon>Pseudomonadati</taxon>
        <taxon>Pseudomonadota</taxon>
        <taxon>Gammaproteobacteria</taxon>
        <taxon>Moraxellales</taxon>
        <taxon>Moraxellaceae</taxon>
        <taxon>Psychrobacter</taxon>
    </lineage>
</organism>
<accession>Q1QEI9</accession>
<comment type="function">
    <text evidence="1">O-methyltransferase that catalyzes the 2 O-methylation steps in the ubiquinone biosynthetic pathway.</text>
</comment>
<comment type="catalytic activity">
    <reaction evidence="1">
        <text>a 3-demethylubiquinol + S-adenosyl-L-methionine = a ubiquinol + S-adenosyl-L-homocysteine + H(+)</text>
        <dbReference type="Rhea" id="RHEA:44380"/>
        <dbReference type="Rhea" id="RHEA-COMP:9566"/>
        <dbReference type="Rhea" id="RHEA-COMP:10914"/>
        <dbReference type="ChEBI" id="CHEBI:15378"/>
        <dbReference type="ChEBI" id="CHEBI:17976"/>
        <dbReference type="ChEBI" id="CHEBI:57856"/>
        <dbReference type="ChEBI" id="CHEBI:59789"/>
        <dbReference type="ChEBI" id="CHEBI:84422"/>
        <dbReference type="EC" id="2.1.1.64"/>
    </reaction>
</comment>
<comment type="catalytic activity">
    <reaction evidence="1">
        <text>a 3-(all-trans-polyprenyl)benzene-1,2-diol + S-adenosyl-L-methionine = a 2-methoxy-6-(all-trans-polyprenyl)phenol + S-adenosyl-L-homocysteine + H(+)</text>
        <dbReference type="Rhea" id="RHEA:31411"/>
        <dbReference type="Rhea" id="RHEA-COMP:9550"/>
        <dbReference type="Rhea" id="RHEA-COMP:9551"/>
        <dbReference type="ChEBI" id="CHEBI:15378"/>
        <dbReference type="ChEBI" id="CHEBI:57856"/>
        <dbReference type="ChEBI" id="CHEBI:59789"/>
        <dbReference type="ChEBI" id="CHEBI:62729"/>
        <dbReference type="ChEBI" id="CHEBI:62731"/>
        <dbReference type="EC" id="2.1.1.222"/>
    </reaction>
</comment>
<comment type="pathway">
    <text evidence="1">Cofactor biosynthesis; ubiquinone biosynthesis.</text>
</comment>
<comment type="similarity">
    <text evidence="1">Belongs to the methyltransferase superfamily. UbiG/COQ3 family.</text>
</comment>
<comment type="sequence caution" evidence="2">
    <conflict type="erroneous initiation">
        <sequence resource="EMBL-CDS" id="ABE73914"/>
    </conflict>
</comment>
<dbReference type="EC" id="2.1.1.222" evidence="1"/>
<dbReference type="EC" id="2.1.1.64" evidence="1"/>
<dbReference type="EMBL" id="CP000323">
    <property type="protein sequence ID" value="ABE73914.1"/>
    <property type="status" value="ALT_INIT"/>
    <property type="molecule type" value="Genomic_DNA"/>
</dbReference>
<dbReference type="SMR" id="Q1QEI9"/>
<dbReference type="STRING" id="335284.Pcryo_0130"/>
<dbReference type="KEGG" id="pcr:Pcryo_0130"/>
<dbReference type="eggNOG" id="COG2227">
    <property type="taxonomic scope" value="Bacteria"/>
</dbReference>
<dbReference type="HOGENOM" id="CLU_042432_5_0_6"/>
<dbReference type="UniPathway" id="UPA00232"/>
<dbReference type="Proteomes" id="UP000002425">
    <property type="component" value="Chromosome"/>
</dbReference>
<dbReference type="GO" id="GO:0102208">
    <property type="term" value="F:2-polyprenyl-6-hydroxyphenol methylase activity"/>
    <property type="evidence" value="ECO:0007669"/>
    <property type="project" value="UniProtKB-EC"/>
</dbReference>
<dbReference type="GO" id="GO:0061542">
    <property type="term" value="F:3-demethylubiquinol 3-O-methyltransferase activity"/>
    <property type="evidence" value="ECO:0007669"/>
    <property type="project" value="UniProtKB-UniRule"/>
</dbReference>
<dbReference type="GO" id="GO:0010420">
    <property type="term" value="F:polyprenyldihydroxybenzoate methyltransferase activity"/>
    <property type="evidence" value="ECO:0007669"/>
    <property type="project" value="InterPro"/>
</dbReference>
<dbReference type="GO" id="GO:0032259">
    <property type="term" value="P:methylation"/>
    <property type="evidence" value="ECO:0007669"/>
    <property type="project" value="UniProtKB-KW"/>
</dbReference>
<dbReference type="CDD" id="cd02440">
    <property type="entry name" value="AdoMet_MTases"/>
    <property type="match status" value="1"/>
</dbReference>
<dbReference type="FunFam" id="3.40.50.150:FF:000028">
    <property type="entry name" value="Ubiquinone biosynthesis O-methyltransferase"/>
    <property type="match status" value="1"/>
</dbReference>
<dbReference type="Gene3D" id="3.40.50.150">
    <property type="entry name" value="Vaccinia Virus protein VP39"/>
    <property type="match status" value="1"/>
</dbReference>
<dbReference type="HAMAP" id="MF_00472">
    <property type="entry name" value="UbiG"/>
    <property type="match status" value="1"/>
</dbReference>
<dbReference type="InterPro" id="IPR029063">
    <property type="entry name" value="SAM-dependent_MTases_sf"/>
</dbReference>
<dbReference type="InterPro" id="IPR010233">
    <property type="entry name" value="UbiG_MeTrfase"/>
</dbReference>
<dbReference type="NCBIfam" id="TIGR01983">
    <property type="entry name" value="UbiG"/>
    <property type="match status" value="1"/>
</dbReference>
<dbReference type="PANTHER" id="PTHR43464">
    <property type="entry name" value="METHYLTRANSFERASE"/>
    <property type="match status" value="1"/>
</dbReference>
<dbReference type="PANTHER" id="PTHR43464:SF19">
    <property type="entry name" value="UBIQUINONE BIOSYNTHESIS O-METHYLTRANSFERASE, MITOCHONDRIAL"/>
    <property type="match status" value="1"/>
</dbReference>
<dbReference type="Pfam" id="PF13489">
    <property type="entry name" value="Methyltransf_23"/>
    <property type="match status" value="1"/>
</dbReference>
<dbReference type="SUPFAM" id="SSF53335">
    <property type="entry name" value="S-adenosyl-L-methionine-dependent methyltransferases"/>
    <property type="match status" value="1"/>
</dbReference>
<protein>
    <recommendedName>
        <fullName evidence="1">Ubiquinone biosynthesis O-methyltransferase</fullName>
    </recommendedName>
    <alternativeName>
        <fullName evidence="1">2-polyprenyl-6-hydroxyphenol methylase</fullName>
        <ecNumber evidence="1">2.1.1.222</ecNumber>
    </alternativeName>
    <alternativeName>
        <fullName evidence="1">3-demethylubiquinone 3-O-methyltransferase</fullName>
        <ecNumber evidence="1">2.1.1.64</ecNumber>
    </alternativeName>
</protein>
<feature type="chain" id="PRO_0000241723" description="Ubiquinone biosynthesis O-methyltransferase">
    <location>
        <begin position="1"/>
        <end position="257"/>
    </location>
</feature>
<feature type="binding site" evidence="1">
    <location>
        <position position="43"/>
    </location>
    <ligand>
        <name>S-adenosyl-L-methionine</name>
        <dbReference type="ChEBI" id="CHEBI:59789"/>
    </ligand>
</feature>
<feature type="binding site" evidence="1">
    <location>
        <position position="77"/>
    </location>
    <ligand>
        <name>S-adenosyl-L-methionine</name>
        <dbReference type="ChEBI" id="CHEBI:59789"/>
    </ligand>
</feature>
<feature type="binding site" evidence="1">
    <location>
        <position position="98"/>
    </location>
    <ligand>
        <name>S-adenosyl-L-methionine</name>
        <dbReference type="ChEBI" id="CHEBI:59789"/>
    </ligand>
</feature>
<feature type="binding site" evidence="1">
    <location>
        <position position="144"/>
    </location>
    <ligand>
        <name>S-adenosyl-L-methionine</name>
        <dbReference type="ChEBI" id="CHEBI:59789"/>
    </ligand>
</feature>
<gene>
    <name evidence="1" type="primary">ubiG</name>
    <name type="ordered locus">Pcryo_0130</name>
</gene>
<evidence type="ECO:0000255" key="1">
    <source>
        <dbReference type="HAMAP-Rule" id="MF_00472"/>
    </source>
</evidence>
<evidence type="ECO:0000305" key="2"/>
<name>UBIG_PSYCK</name>
<sequence length="257" mass="28213">MADDTINAINVDPSEVEKFNKLAGEWWNKTGAFATLHEINPLRLNWIEENVKRGYVSADSQKTAEMGLAGKKVLDVGCGGGILSESMARRGADVTGIDLGTENLKAASLHAEQSNLQDTLRYQHIPVEALAATHAGQFDVVTCMEMLEHVPDPAAIVDACFKLLAPGGVCVLSTINRNPKSYLFAIVGAEYVLRLLDRGTHDYAKFITPAELDKMAIDAEFARQDIIGLHYNPLTKRYWLAQNVDVNYMIAVQKPLA</sequence>
<proteinExistence type="inferred from homology"/>